<protein>
    <recommendedName>
        <fullName evidence="1">Bifunctional purine biosynthesis protein PurH</fullName>
    </recommendedName>
    <domain>
        <recommendedName>
            <fullName evidence="1">Phosphoribosylaminoimidazolecarboxamide formyltransferase</fullName>
            <ecNumber evidence="1">2.1.2.3</ecNumber>
        </recommendedName>
        <alternativeName>
            <fullName evidence="1">AICAR transformylase</fullName>
        </alternativeName>
    </domain>
    <domain>
        <recommendedName>
            <fullName evidence="1">IMP cyclohydrolase</fullName>
            <ecNumber evidence="1">3.5.4.10</ecNumber>
        </recommendedName>
        <alternativeName>
            <fullName evidence="1">ATIC</fullName>
        </alternativeName>
        <alternativeName>
            <fullName evidence="1">IMP synthase</fullName>
        </alternativeName>
        <alternativeName>
            <fullName evidence="1">Inosinicase</fullName>
        </alternativeName>
    </domain>
</protein>
<proteinExistence type="inferred from homology"/>
<reference key="1">
    <citation type="journal article" date="2002" name="Mol. Microbiol.">
        <title>Genome sequence of Streptococcus agalactiae, a pathogen causing invasive neonatal disease.</title>
        <authorList>
            <person name="Glaser P."/>
            <person name="Rusniok C."/>
            <person name="Buchrieser C."/>
            <person name="Chevalier F."/>
            <person name="Frangeul L."/>
            <person name="Msadek T."/>
            <person name="Zouine M."/>
            <person name="Couve E."/>
            <person name="Lalioui L."/>
            <person name="Poyart C."/>
            <person name="Trieu-Cuot P."/>
            <person name="Kunst F."/>
        </authorList>
    </citation>
    <scope>NUCLEOTIDE SEQUENCE [LARGE SCALE GENOMIC DNA]</scope>
    <source>
        <strain>NEM316</strain>
    </source>
</reference>
<accession>P67545</accession>
<accession>Q8E2F8</accession>
<accession>Q8E7W6</accession>
<organism>
    <name type="scientific">Streptococcus agalactiae serotype III (strain NEM316)</name>
    <dbReference type="NCBI Taxonomy" id="211110"/>
    <lineage>
        <taxon>Bacteria</taxon>
        <taxon>Bacillati</taxon>
        <taxon>Bacillota</taxon>
        <taxon>Bacilli</taxon>
        <taxon>Lactobacillales</taxon>
        <taxon>Streptococcaceae</taxon>
        <taxon>Streptococcus</taxon>
    </lineage>
</organism>
<comment type="catalytic activity">
    <reaction evidence="1">
        <text>(6R)-10-formyltetrahydrofolate + 5-amino-1-(5-phospho-beta-D-ribosyl)imidazole-4-carboxamide = 5-formamido-1-(5-phospho-D-ribosyl)imidazole-4-carboxamide + (6S)-5,6,7,8-tetrahydrofolate</text>
        <dbReference type="Rhea" id="RHEA:22192"/>
        <dbReference type="ChEBI" id="CHEBI:57453"/>
        <dbReference type="ChEBI" id="CHEBI:58467"/>
        <dbReference type="ChEBI" id="CHEBI:58475"/>
        <dbReference type="ChEBI" id="CHEBI:195366"/>
        <dbReference type="EC" id="2.1.2.3"/>
    </reaction>
</comment>
<comment type="catalytic activity">
    <reaction evidence="1">
        <text>IMP + H2O = 5-formamido-1-(5-phospho-D-ribosyl)imidazole-4-carboxamide</text>
        <dbReference type="Rhea" id="RHEA:18445"/>
        <dbReference type="ChEBI" id="CHEBI:15377"/>
        <dbReference type="ChEBI" id="CHEBI:58053"/>
        <dbReference type="ChEBI" id="CHEBI:58467"/>
        <dbReference type="EC" id="3.5.4.10"/>
    </reaction>
</comment>
<comment type="pathway">
    <text evidence="1">Purine metabolism; IMP biosynthesis via de novo pathway; 5-formamido-1-(5-phospho-D-ribosyl)imidazole-4-carboxamide from 5-amino-1-(5-phospho-D-ribosyl)imidazole-4-carboxamide (10-formyl THF route): step 1/1.</text>
</comment>
<comment type="pathway">
    <text evidence="1">Purine metabolism; IMP biosynthesis via de novo pathway; IMP from 5-formamido-1-(5-phospho-D-ribosyl)imidazole-4-carboxamide: step 1/1.</text>
</comment>
<comment type="domain">
    <text evidence="1">The IMP cyclohydrolase activity resides in the N-terminal region.</text>
</comment>
<comment type="similarity">
    <text evidence="1">Belongs to the PurH family.</text>
</comment>
<keyword id="KW-0378">Hydrolase</keyword>
<keyword id="KW-0511">Multifunctional enzyme</keyword>
<keyword id="KW-0658">Purine biosynthesis</keyword>
<keyword id="KW-0808">Transferase</keyword>
<name>PUR9_STRA3</name>
<feature type="chain" id="PRO_0000192130" description="Bifunctional purine biosynthesis protein PurH">
    <location>
        <begin position="1"/>
        <end position="515"/>
    </location>
</feature>
<feature type="domain" description="MGS-like" evidence="2">
    <location>
        <begin position="1"/>
        <end position="145"/>
    </location>
</feature>
<gene>
    <name evidence="1" type="primary">purH</name>
    <name type="ordered locus">gbs0029</name>
</gene>
<sequence length="515" mass="56084">MTKRALISVSDKSGIIDFAKELKNLGWDIISTGGTKVALDDAGVETIAIDDVTGFPEMMDGRVKTLHPNIHGGLLARRDADSHLQAAKDNNIELIDLVVVNLYPFKETILRPDVTYDLAVENIDIGGPSMLRSAAKNHASVTVVVDSADYATVLGELADASQTTFKTRQRLAAKAFRHTAAYDALIAEYFTAQVGEAKPEKLTITYDLKQAMRYGENPQQDADFYQKALPTDYSIASAKQLNGKELSFNNIRDADAAIRIIRDFKDSPTVVALKHMNPCGIGQADDIETAWDYAYEADPVSIFGGIVVLNREVDAATAEKMHPIFLEIIIAPSYSEEALAILTNKKKNLRILELPFDAQAASEVEAEYTGVVGGLLVQNQDVVAENPSDWQVVTDRQPTEQEATALEFAWKAIKYVKSNGIIITNDHMTLGLGAGQTNRVGSVKIAIEQAKDHLDGAVLASDAFFPFADNIEEIAAAGIKAIIQPGGSVRDQESIDAANKHGLTMIFTGVRHFRH</sequence>
<dbReference type="EC" id="2.1.2.3" evidence="1"/>
<dbReference type="EC" id="3.5.4.10" evidence="1"/>
<dbReference type="EMBL" id="AL766843">
    <property type="protein sequence ID" value="CAD45674.1"/>
    <property type="molecule type" value="Genomic_DNA"/>
</dbReference>
<dbReference type="RefSeq" id="WP_000166549.1">
    <property type="nucleotide sequence ID" value="NC_004368.1"/>
</dbReference>
<dbReference type="SMR" id="P67545"/>
<dbReference type="KEGG" id="san:gbs0029"/>
<dbReference type="eggNOG" id="COG0138">
    <property type="taxonomic scope" value="Bacteria"/>
</dbReference>
<dbReference type="HOGENOM" id="CLU_016316_5_2_9"/>
<dbReference type="UniPathway" id="UPA00074">
    <property type="reaction ID" value="UER00133"/>
</dbReference>
<dbReference type="UniPathway" id="UPA00074">
    <property type="reaction ID" value="UER00135"/>
</dbReference>
<dbReference type="Proteomes" id="UP000000823">
    <property type="component" value="Chromosome"/>
</dbReference>
<dbReference type="GO" id="GO:0005829">
    <property type="term" value="C:cytosol"/>
    <property type="evidence" value="ECO:0007669"/>
    <property type="project" value="TreeGrafter"/>
</dbReference>
<dbReference type="GO" id="GO:0003937">
    <property type="term" value="F:IMP cyclohydrolase activity"/>
    <property type="evidence" value="ECO:0007669"/>
    <property type="project" value="UniProtKB-UniRule"/>
</dbReference>
<dbReference type="GO" id="GO:0004643">
    <property type="term" value="F:phosphoribosylaminoimidazolecarboxamide formyltransferase activity"/>
    <property type="evidence" value="ECO:0007669"/>
    <property type="project" value="UniProtKB-UniRule"/>
</dbReference>
<dbReference type="GO" id="GO:0006189">
    <property type="term" value="P:'de novo' IMP biosynthetic process"/>
    <property type="evidence" value="ECO:0007669"/>
    <property type="project" value="UniProtKB-UniRule"/>
</dbReference>
<dbReference type="CDD" id="cd01421">
    <property type="entry name" value="IMPCH"/>
    <property type="match status" value="1"/>
</dbReference>
<dbReference type="FunFam" id="3.40.140.20:FF:000001">
    <property type="entry name" value="Bifunctional purine biosynthesis protein PurH"/>
    <property type="match status" value="1"/>
</dbReference>
<dbReference type="FunFam" id="3.40.140.20:FF:000002">
    <property type="entry name" value="Bifunctional purine biosynthesis protein PurH"/>
    <property type="match status" value="1"/>
</dbReference>
<dbReference type="FunFam" id="3.40.50.1380:FF:000001">
    <property type="entry name" value="Bifunctional purine biosynthesis protein PurH"/>
    <property type="match status" value="1"/>
</dbReference>
<dbReference type="Gene3D" id="3.40.140.20">
    <property type="match status" value="2"/>
</dbReference>
<dbReference type="Gene3D" id="3.40.50.1380">
    <property type="entry name" value="Methylglyoxal synthase-like domain"/>
    <property type="match status" value="1"/>
</dbReference>
<dbReference type="HAMAP" id="MF_00139">
    <property type="entry name" value="PurH"/>
    <property type="match status" value="1"/>
</dbReference>
<dbReference type="InterPro" id="IPR024051">
    <property type="entry name" value="AICAR_Tfase_dup_dom_sf"/>
</dbReference>
<dbReference type="InterPro" id="IPR016193">
    <property type="entry name" value="Cytidine_deaminase-like"/>
</dbReference>
<dbReference type="InterPro" id="IPR011607">
    <property type="entry name" value="MGS-like_dom"/>
</dbReference>
<dbReference type="InterPro" id="IPR036914">
    <property type="entry name" value="MGS-like_dom_sf"/>
</dbReference>
<dbReference type="InterPro" id="IPR002695">
    <property type="entry name" value="PurH-like"/>
</dbReference>
<dbReference type="NCBIfam" id="NF002049">
    <property type="entry name" value="PRK00881.1"/>
    <property type="match status" value="1"/>
</dbReference>
<dbReference type="NCBIfam" id="TIGR00355">
    <property type="entry name" value="purH"/>
    <property type="match status" value="1"/>
</dbReference>
<dbReference type="PANTHER" id="PTHR11692:SF0">
    <property type="entry name" value="BIFUNCTIONAL PURINE BIOSYNTHESIS PROTEIN ATIC"/>
    <property type="match status" value="1"/>
</dbReference>
<dbReference type="PANTHER" id="PTHR11692">
    <property type="entry name" value="BIFUNCTIONAL PURINE BIOSYNTHESIS PROTEIN PURH"/>
    <property type="match status" value="1"/>
</dbReference>
<dbReference type="Pfam" id="PF01808">
    <property type="entry name" value="AICARFT_IMPCHas"/>
    <property type="match status" value="1"/>
</dbReference>
<dbReference type="Pfam" id="PF02142">
    <property type="entry name" value="MGS"/>
    <property type="match status" value="1"/>
</dbReference>
<dbReference type="PIRSF" id="PIRSF000414">
    <property type="entry name" value="AICARFT_IMPCHas"/>
    <property type="match status" value="1"/>
</dbReference>
<dbReference type="SMART" id="SM00798">
    <property type="entry name" value="AICARFT_IMPCHas"/>
    <property type="match status" value="1"/>
</dbReference>
<dbReference type="SMART" id="SM00851">
    <property type="entry name" value="MGS"/>
    <property type="match status" value="1"/>
</dbReference>
<dbReference type="SUPFAM" id="SSF53927">
    <property type="entry name" value="Cytidine deaminase-like"/>
    <property type="match status" value="1"/>
</dbReference>
<dbReference type="SUPFAM" id="SSF52335">
    <property type="entry name" value="Methylglyoxal synthase-like"/>
    <property type="match status" value="1"/>
</dbReference>
<dbReference type="PROSITE" id="PS51855">
    <property type="entry name" value="MGS"/>
    <property type="match status" value="1"/>
</dbReference>
<evidence type="ECO:0000255" key="1">
    <source>
        <dbReference type="HAMAP-Rule" id="MF_00139"/>
    </source>
</evidence>
<evidence type="ECO:0000255" key="2">
    <source>
        <dbReference type="PROSITE-ProRule" id="PRU01202"/>
    </source>
</evidence>